<reference key="1">
    <citation type="submission" date="2009-07" db="EMBL/GenBank/DDBJ databases">
        <title>Complete sequence of Pectobacterium carotovorum subsp. carotovorum PC1.</title>
        <authorList>
            <consortium name="US DOE Joint Genome Institute"/>
            <person name="Lucas S."/>
            <person name="Copeland A."/>
            <person name="Lapidus A."/>
            <person name="Glavina del Rio T."/>
            <person name="Tice H."/>
            <person name="Bruce D."/>
            <person name="Goodwin L."/>
            <person name="Pitluck S."/>
            <person name="Munk A.C."/>
            <person name="Brettin T."/>
            <person name="Detter J.C."/>
            <person name="Han C."/>
            <person name="Tapia R."/>
            <person name="Larimer F."/>
            <person name="Land M."/>
            <person name="Hauser L."/>
            <person name="Kyrpides N."/>
            <person name="Mikhailova N."/>
            <person name="Balakrishnan V."/>
            <person name="Glasner J."/>
            <person name="Perna N.T."/>
        </authorList>
    </citation>
    <scope>NUCLEOTIDE SEQUENCE [LARGE SCALE GENOMIC DNA]</scope>
    <source>
        <strain>PC1</strain>
    </source>
</reference>
<evidence type="ECO:0000255" key="1">
    <source>
        <dbReference type="HAMAP-Rule" id="MF_00303"/>
    </source>
</evidence>
<name>TIG_PECCP</name>
<keyword id="KW-0131">Cell cycle</keyword>
<keyword id="KW-0132">Cell division</keyword>
<keyword id="KW-0143">Chaperone</keyword>
<keyword id="KW-0963">Cytoplasm</keyword>
<keyword id="KW-0413">Isomerase</keyword>
<keyword id="KW-0697">Rotamase</keyword>
<sequence>MQVSVETTQGLGRRVTITVAADIIESAVKSELVNAAKKVRIDGFRKGKVPMNVVAQRYGASVRQDVLGDLMQRNFVDAIIKEKINPVGAPNYIPGEYAVGGDFTYSVEFEVYPEVELKGLDAIEVEKPVVEVTDADVDTMLETLRKQQATWKETDRAAAAEDRVTIDFTGSIDGEVFEGGKASDFVLAMGQNRMIPGFEDGVVGHKAGEEFTIDVNFPEDYHAENLKGKAAQFAIVLKKVEERELPELTEEFIKRFGVADGSQEGLRAEVRKNMERELKGAVRNRVKTQVLDGLINANEIDVPAALIDGEIDVLRRQAAQRFGGNEKQAQELPRELFEEQAKRRVVIGLLLGEVISSNELKADEARVNALIEEMASAYEDPQEVIEFYGKNKELLNNMRNVALEEQAVETVLAKAKVVEKSVSFNELMNQTATA</sequence>
<accession>C6DB54</accession>
<comment type="function">
    <text evidence="1">Involved in protein export. Acts as a chaperone by maintaining the newly synthesized protein in an open conformation. Functions as a peptidyl-prolyl cis-trans isomerase.</text>
</comment>
<comment type="catalytic activity">
    <reaction evidence="1">
        <text>[protein]-peptidylproline (omega=180) = [protein]-peptidylproline (omega=0)</text>
        <dbReference type="Rhea" id="RHEA:16237"/>
        <dbReference type="Rhea" id="RHEA-COMP:10747"/>
        <dbReference type="Rhea" id="RHEA-COMP:10748"/>
        <dbReference type="ChEBI" id="CHEBI:83833"/>
        <dbReference type="ChEBI" id="CHEBI:83834"/>
        <dbReference type="EC" id="5.2.1.8"/>
    </reaction>
</comment>
<comment type="subcellular location">
    <subcellularLocation>
        <location>Cytoplasm</location>
    </subcellularLocation>
    <text evidence="1">About half TF is bound to the ribosome near the polypeptide exit tunnel while the other half is free in the cytoplasm.</text>
</comment>
<comment type="domain">
    <text evidence="1">Consists of 3 domains; the N-terminus binds the ribosome, the middle domain has PPIase activity, while the C-terminus has intrinsic chaperone activity on its own.</text>
</comment>
<comment type="similarity">
    <text evidence="1">Belongs to the FKBP-type PPIase family. Tig subfamily.</text>
</comment>
<proteinExistence type="inferred from homology"/>
<gene>
    <name evidence="1" type="primary">tig</name>
    <name type="ordered locus">PC1_1047</name>
</gene>
<protein>
    <recommendedName>
        <fullName evidence="1">Trigger factor</fullName>
        <shortName evidence="1">TF</shortName>
        <ecNumber evidence="1">5.2.1.8</ecNumber>
    </recommendedName>
    <alternativeName>
        <fullName evidence="1">PPIase</fullName>
    </alternativeName>
</protein>
<dbReference type="EC" id="5.2.1.8" evidence="1"/>
<dbReference type="EMBL" id="CP001657">
    <property type="protein sequence ID" value="ACT12096.1"/>
    <property type="molecule type" value="Genomic_DNA"/>
</dbReference>
<dbReference type="RefSeq" id="WP_015839346.1">
    <property type="nucleotide sequence ID" value="NC_012917.1"/>
</dbReference>
<dbReference type="SMR" id="C6DB54"/>
<dbReference type="STRING" id="561230.PC1_1047"/>
<dbReference type="GeneID" id="67795178"/>
<dbReference type="KEGG" id="pct:PC1_1047"/>
<dbReference type="eggNOG" id="COG0544">
    <property type="taxonomic scope" value="Bacteria"/>
</dbReference>
<dbReference type="HOGENOM" id="CLU_033058_2_0_6"/>
<dbReference type="OrthoDB" id="9767721at2"/>
<dbReference type="Proteomes" id="UP000002736">
    <property type="component" value="Chromosome"/>
</dbReference>
<dbReference type="GO" id="GO:0005737">
    <property type="term" value="C:cytoplasm"/>
    <property type="evidence" value="ECO:0007669"/>
    <property type="project" value="UniProtKB-SubCell"/>
</dbReference>
<dbReference type="GO" id="GO:0003755">
    <property type="term" value="F:peptidyl-prolyl cis-trans isomerase activity"/>
    <property type="evidence" value="ECO:0007669"/>
    <property type="project" value="UniProtKB-UniRule"/>
</dbReference>
<dbReference type="GO" id="GO:0044183">
    <property type="term" value="F:protein folding chaperone"/>
    <property type="evidence" value="ECO:0007669"/>
    <property type="project" value="TreeGrafter"/>
</dbReference>
<dbReference type="GO" id="GO:0043022">
    <property type="term" value="F:ribosome binding"/>
    <property type="evidence" value="ECO:0007669"/>
    <property type="project" value="TreeGrafter"/>
</dbReference>
<dbReference type="GO" id="GO:0051083">
    <property type="term" value="P:'de novo' cotranslational protein folding"/>
    <property type="evidence" value="ECO:0007669"/>
    <property type="project" value="TreeGrafter"/>
</dbReference>
<dbReference type="GO" id="GO:0051301">
    <property type="term" value="P:cell division"/>
    <property type="evidence" value="ECO:0007669"/>
    <property type="project" value="UniProtKB-KW"/>
</dbReference>
<dbReference type="GO" id="GO:0061077">
    <property type="term" value="P:chaperone-mediated protein folding"/>
    <property type="evidence" value="ECO:0007669"/>
    <property type="project" value="TreeGrafter"/>
</dbReference>
<dbReference type="GO" id="GO:0015031">
    <property type="term" value="P:protein transport"/>
    <property type="evidence" value="ECO:0007669"/>
    <property type="project" value="UniProtKB-UniRule"/>
</dbReference>
<dbReference type="GO" id="GO:0043335">
    <property type="term" value="P:protein unfolding"/>
    <property type="evidence" value="ECO:0007669"/>
    <property type="project" value="TreeGrafter"/>
</dbReference>
<dbReference type="FunFam" id="3.10.50.40:FF:000001">
    <property type="entry name" value="Trigger factor"/>
    <property type="match status" value="1"/>
</dbReference>
<dbReference type="FunFam" id="3.30.70.1050:FF:000001">
    <property type="entry name" value="Trigger factor"/>
    <property type="match status" value="1"/>
</dbReference>
<dbReference type="Gene3D" id="3.10.50.40">
    <property type="match status" value="1"/>
</dbReference>
<dbReference type="Gene3D" id="3.30.70.1050">
    <property type="entry name" value="Trigger factor ribosome-binding domain"/>
    <property type="match status" value="1"/>
</dbReference>
<dbReference type="Gene3D" id="1.10.3120.10">
    <property type="entry name" value="Trigger factor, C-terminal domain"/>
    <property type="match status" value="1"/>
</dbReference>
<dbReference type="HAMAP" id="MF_00303">
    <property type="entry name" value="Trigger_factor_Tig"/>
    <property type="match status" value="1"/>
</dbReference>
<dbReference type="InterPro" id="IPR046357">
    <property type="entry name" value="PPIase_dom_sf"/>
</dbReference>
<dbReference type="InterPro" id="IPR001179">
    <property type="entry name" value="PPIase_FKBP_dom"/>
</dbReference>
<dbReference type="InterPro" id="IPR005215">
    <property type="entry name" value="Trig_fac"/>
</dbReference>
<dbReference type="InterPro" id="IPR008880">
    <property type="entry name" value="Trigger_fac_C"/>
</dbReference>
<dbReference type="InterPro" id="IPR037041">
    <property type="entry name" value="Trigger_fac_C_sf"/>
</dbReference>
<dbReference type="InterPro" id="IPR008881">
    <property type="entry name" value="Trigger_fac_ribosome-bd_bac"/>
</dbReference>
<dbReference type="InterPro" id="IPR036611">
    <property type="entry name" value="Trigger_fac_ribosome-bd_sf"/>
</dbReference>
<dbReference type="InterPro" id="IPR027304">
    <property type="entry name" value="Trigger_fact/SurA_dom_sf"/>
</dbReference>
<dbReference type="NCBIfam" id="TIGR00115">
    <property type="entry name" value="tig"/>
    <property type="match status" value="1"/>
</dbReference>
<dbReference type="PANTHER" id="PTHR30560">
    <property type="entry name" value="TRIGGER FACTOR CHAPERONE AND PEPTIDYL-PROLYL CIS/TRANS ISOMERASE"/>
    <property type="match status" value="1"/>
</dbReference>
<dbReference type="PANTHER" id="PTHR30560:SF3">
    <property type="entry name" value="TRIGGER FACTOR-LIKE PROTEIN TIG, CHLOROPLASTIC"/>
    <property type="match status" value="1"/>
</dbReference>
<dbReference type="Pfam" id="PF00254">
    <property type="entry name" value="FKBP_C"/>
    <property type="match status" value="1"/>
</dbReference>
<dbReference type="Pfam" id="PF05698">
    <property type="entry name" value="Trigger_C"/>
    <property type="match status" value="1"/>
</dbReference>
<dbReference type="Pfam" id="PF05697">
    <property type="entry name" value="Trigger_N"/>
    <property type="match status" value="1"/>
</dbReference>
<dbReference type="PIRSF" id="PIRSF003095">
    <property type="entry name" value="Trigger_factor"/>
    <property type="match status" value="1"/>
</dbReference>
<dbReference type="SUPFAM" id="SSF54534">
    <property type="entry name" value="FKBP-like"/>
    <property type="match status" value="1"/>
</dbReference>
<dbReference type="SUPFAM" id="SSF109998">
    <property type="entry name" value="Triger factor/SurA peptide-binding domain-like"/>
    <property type="match status" value="1"/>
</dbReference>
<dbReference type="SUPFAM" id="SSF102735">
    <property type="entry name" value="Trigger factor ribosome-binding domain"/>
    <property type="match status" value="1"/>
</dbReference>
<dbReference type="PROSITE" id="PS50059">
    <property type="entry name" value="FKBP_PPIASE"/>
    <property type="match status" value="1"/>
</dbReference>
<organism>
    <name type="scientific">Pectobacterium carotovorum subsp. carotovorum (strain PC1)</name>
    <dbReference type="NCBI Taxonomy" id="561230"/>
    <lineage>
        <taxon>Bacteria</taxon>
        <taxon>Pseudomonadati</taxon>
        <taxon>Pseudomonadota</taxon>
        <taxon>Gammaproteobacteria</taxon>
        <taxon>Enterobacterales</taxon>
        <taxon>Pectobacteriaceae</taxon>
        <taxon>Pectobacterium</taxon>
    </lineage>
</organism>
<feature type="chain" id="PRO_1000204995" description="Trigger factor">
    <location>
        <begin position="1"/>
        <end position="434"/>
    </location>
</feature>
<feature type="domain" description="PPIase FKBP-type" evidence="1">
    <location>
        <begin position="161"/>
        <end position="246"/>
    </location>
</feature>